<sequence length="614" mass="67955">MNAPDKFASLLALTREPFPASTKSYLAGSQPGLRVPVRDIQLTNGEVVSVYDTSGPYTDPAVQIDVRKGLASVRGEWIAARGDTEGYEGRVRKALDDGQKAEDGDRLAQLRAEAAALQRQPLRARSGANVTQMHYAKKGIVTPEMEYVALRENGRREWMQQYMQDTAREQRLAGNPLGASIPKIITPEFVRDEVARGRAIIPANINHPEVEPMAIGRNFKVKINANIGNSAVTSSIEEEVEKLVWAIRWGADNVMDLSTGKNIHTTRDWIVRNSPVPIGTVPIYQALEKVGGIAEDLTWEIFRDTLIEQAEQGVDYFTIHAGVRLAYIQLTAARRTGIVSRGGSIMAKWCMAHHKESFLYTHFEDICDIMKAYDVSFSLGDGLRPGCASDANDEAQFAELHTLGELTQIAWKHDVQTMIEGPGHVPMHMIQANMTEQLKTCHEAPFYTLGPLTIDIAPGYDHIASAIGAAMIGWMGTAMLCYVTPKEHLGLPDRDDVKQGIIAYKIAAHAADVAKGHPGARARDDALSQARFDFRWQDQFNLGLDPDTAKEYHDETLPKDSAKVAHFCSMCGPKFCSMKITQEVREFAQQGLQSKAEEFNRTGGELYVPIHRAD</sequence>
<reference key="1">
    <citation type="submission" date="2006-12" db="EMBL/GenBank/DDBJ databases">
        <title>Complete sequence of chromosome 1 of Acidovorax sp. JS42.</title>
        <authorList>
            <person name="Copeland A."/>
            <person name="Lucas S."/>
            <person name="Lapidus A."/>
            <person name="Barry K."/>
            <person name="Detter J.C."/>
            <person name="Glavina del Rio T."/>
            <person name="Dalin E."/>
            <person name="Tice H."/>
            <person name="Pitluck S."/>
            <person name="Chertkov O."/>
            <person name="Brettin T."/>
            <person name="Bruce D."/>
            <person name="Han C."/>
            <person name="Tapia R."/>
            <person name="Gilna P."/>
            <person name="Schmutz J."/>
            <person name="Larimer F."/>
            <person name="Land M."/>
            <person name="Hauser L."/>
            <person name="Kyrpides N."/>
            <person name="Kim E."/>
            <person name="Stahl D."/>
            <person name="Richardson P."/>
        </authorList>
    </citation>
    <scope>NUCLEOTIDE SEQUENCE [LARGE SCALE GENOMIC DNA]</scope>
    <source>
        <strain>JS42</strain>
    </source>
</reference>
<organism>
    <name type="scientific">Acidovorax sp. (strain JS42)</name>
    <dbReference type="NCBI Taxonomy" id="232721"/>
    <lineage>
        <taxon>Bacteria</taxon>
        <taxon>Pseudomonadati</taxon>
        <taxon>Pseudomonadota</taxon>
        <taxon>Betaproteobacteria</taxon>
        <taxon>Burkholderiales</taxon>
        <taxon>Comamonadaceae</taxon>
        <taxon>Acidovorax</taxon>
    </lineage>
</organism>
<evidence type="ECO:0000255" key="1">
    <source>
        <dbReference type="HAMAP-Rule" id="MF_00089"/>
    </source>
</evidence>
<keyword id="KW-0004">4Fe-4S</keyword>
<keyword id="KW-0408">Iron</keyword>
<keyword id="KW-0411">Iron-sulfur</keyword>
<keyword id="KW-0456">Lyase</keyword>
<keyword id="KW-0479">Metal-binding</keyword>
<keyword id="KW-0949">S-adenosyl-L-methionine</keyword>
<keyword id="KW-0784">Thiamine biosynthesis</keyword>
<keyword id="KW-0862">Zinc</keyword>
<protein>
    <recommendedName>
        <fullName evidence="1">Phosphomethylpyrimidine synthase</fullName>
        <ecNumber evidence="1">4.1.99.17</ecNumber>
    </recommendedName>
    <alternativeName>
        <fullName evidence="1">Hydroxymethylpyrimidine phosphate synthase</fullName>
        <shortName evidence="1">HMP-P synthase</shortName>
        <shortName evidence="1">HMP-phosphate synthase</shortName>
        <shortName evidence="1">HMPP synthase</shortName>
    </alternativeName>
    <alternativeName>
        <fullName evidence="1">Thiamine biosynthesis protein ThiC</fullName>
    </alternativeName>
</protein>
<accession>A1WBZ7</accession>
<proteinExistence type="inferred from homology"/>
<comment type="function">
    <text evidence="1">Catalyzes the synthesis of the hydroxymethylpyrimidine phosphate (HMP-P) moiety of thiamine from aminoimidazole ribotide (AIR) in a radical S-adenosyl-L-methionine (SAM)-dependent reaction.</text>
</comment>
<comment type="catalytic activity">
    <reaction evidence="1">
        <text>5-amino-1-(5-phospho-beta-D-ribosyl)imidazole + S-adenosyl-L-methionine = 4-amino-2-methyl-5-(phosphooxymethyl)pyrimidine + CO + 5'-deoxyadenosine + formate + L-methionine + 3 H(+)</text>
        <dbReference type="Rhea" id="RHEA:24840"/>
        <dbReference type="ChEBI" id="CHEBI:15378"/>
        <dbReference type="ChEBI" id="CHEBI:15740"/>
        <dbReference type="ChEBI" id="CHEBI:17245"/>
        <dbReference type="ChEBI" id="CHEBI:17319"/>
        <dbReference type="ChEBI" id="CHEBI:57844"/>
        <dbReference type="ChEBI" id="CHEBI:58354"/>
        <dbReference type="ChEBI" id="CHEBI:59789"/>
        <dbReference type="ChEBI" id="CHEBI:137981"/>
        <dbReference type="EC" id="4.1.99.17"/>
    </reaction>
</comment>
<comment type="cofactor">
    <cofactor evidence="1">
        <name>[4Fe-4S] cluster</name>
        <dbReference type="ChEBI" id="CHEBI:49883"/>
    </cofactor>
    <text evidence="1">Binds 1 [4Fe-4S] cluster per subunit. The cluster is coordinated with 3 cysteines and an exchangeable S-adenosyl-L-methionine.</text>
</comment>
<comment type="pathway">
    <text evidence="1">Cofactor biosynthesis; thiamine diphosphate biosynthesis.</text>
</comment>
<comment type="subunit">
    <text evidence="1">Homodimer.</text>
</comment>
<comment type="similarity">
    <text evidence="1">Belongs to the ThiC family.</text>
</comment>
<gene>
    <name evidence="1" type="primary">thiC</name>
    <name type="ordered locus">Ajs_3661</name>
</gene>
<name>THIC_ACISJ</name>
<dbReference type="EC" id="4.1.99.17" evidence="1"/>
<dbReference type="EMBL" id="CP000539">
    <property type="protein sequence ID" value="ABM43772.1"/>
    <property type="molecule type" value="Genomic_DNA"/>
</dbReference>
<dbReference type="SMR" id="A1WBZ7"/>
<dbReference type="STRING" id="232721.Ajs_3661"/>
<dbReference type="KEGG" id="ajs:Ajs_3661"/>
<dbReference type="eggNOG" id="COG0422">
    <property type="taxonomic scope" value="Bacteria"/>
</dbReference>
<dbReference type="HOGENOM" id="CLU_013181_2_1_4"/>
<dbReference type="UniPathway" id="UPA00060"/>
<dbReference type="Proteomes" id="UP000000645">
    <property type="component" value="Chromosome"/>
</dbReference>
<dbReference type="GO" id="GO:0005829">
    <property type="term" value="C:cytosol"/>
    <property type="evidence" value="ECO:0007669"/>
    <property type="project" value="TreeGrafter"/>
</dbReference>
<dbReference type="GO" id="GO:0051539">
    <property type="term" value="F:4 iron, 4 sulfur cluster binding"/>
    <property type="evidence" value="ECO:0007669"/>
    <property type="project" value="UniProtKB-KW"/>
</dbReference>
<dbReference type="GO" id="GO:0016830">
    <property type="term" value="F:carbon-carbon lyase activity"/>
    <property type="evidence" value="ECO:0007669"/>
    <property type="project" value="InterPro"/>
</dbReference>
<dbReference type="GO" id="GO:0008270">
    <property type="term" value="F:zinc ion binding"/>
    <property type="evidence" value="ECO:0007669"/>
    <property type="project" value="UniProtKB-UniRule"/>
</dbReference>
<dbReference type="GO" id="GO:0009228">
    <property type="term" value="P:thiamine biosynthetic process"/>
    <property type="evidence" value="ECO:0007669"/>
    <property type="project" value="UniProtKB-KW"/>
</dbReference>
<dbReference type="GO" id="GO:0009229">
    <property type="term" value="P:thiamine diphosphate biosynthetic process"/>
    <property type="evidence" value="ECO:0007669"/>
    <property type="project" value="UniProtKB-UniRule"/>
</dbReference>
<dbReference type="FunFam" id="3.20.20.540:FF:000001">
    <property type="entry name" value="Phosphomethylpyrimidine synthase"/>
    <property type="match status" value="1"/>
</dbReference>
<dbReference type="Gene3D" id="6.10.250.620">
    <property type="match status" value="1"/>
</dbReference>
<dbReference type="Gene3D" id="3.20.20.540">
    <property type="entry name" value="Radical SAM ThiC family, central domain"/>
    <property type="match status" value="1"/>
</dbReference>
<dbReference type="HAMAP" id="MF_00089">
    <property type="entry name" value="ThiC"/>
    <property type="match status" value="1"/>
</dbReference>
<dbReference type="InterPro" id="IPR037509">
    <property type="entry name" value="ThiC"/>
</dbReference>
<dbReference type="InterPro" id="IPR025747">
    <property type="entry name" value="ThiC-associated_dom"/>
</dbReference>
<dbReference type="InterPro" id="IPR038521">
    <property type="entry name" value="ThiC/Bza_core_dom"/>
</dbReference>
<dbReference type="InterPro" id="IPR002817">
    <property type="entry name" value="ThiC/BzaA/B"/>
</dbReference>
<dbReference type="NCBIfam" id="NF006763">
    <property type="entry name" value="PRK09284.1"/>
    <property type="match status" value="1"/>
</dbReference>
<dbReference type="NCBIfam" id="NF009895">
    <property type="entry name" value="PRK13352.1"/>
    <property type="match status" value="1"/>
</dbReference>
<dbReference type="NCBIfam" id="TIGR00190">
    <property type="entry name" value="thiC"/>
    <property type="match status" value="1"/>
</dbReference>
<dbReference type="PANTHER" id="PTHR30557:SF1">
    <property type="entry name" value="PHOSPHOMETHYLPYRIMIDINE SYNTHASE, CHLOROPLASTIC"/>
    <property type="match status" value="1"/>
</dbReference>
<dbReference type="PANTHER" id="PTHR30557">
    <property type="entry name" value="THIAMINE BIOSYNTHESIS PROTEIN THIC"/>
    <property type="match status" value="1"/>
</dbReference>
<dbReference type="Pfam" id="PF13667">
    <property type="entry name" value="ThiC-associated"/>
    <property type="match status" value="1"/>
</dbReference>
<dbReference type="Pfam" id="PF01964">
    <property type="entry name" value="ThiC_Rad_SAM"/>
    <property type="match status" value="1"/>
</dbReference>
<dbReference type="SFLD" id="SFLDF00407">
    <property type="entry name" value="phosphomethylpyrimidine_syntha"/>
    <property type="match status" value="1"/>
</dbReference>
<dbReference type="SFLD" id="SFLDG01114">
    <property type="entry name" value="phosphomethylpyrimidine_syntha"/>
    <property type="match status" value="1"/>
</dbReference>
<dbReference type="SFLD" id="SFLDS00113">
    <property type="entry name" value="Radical_SAM_Phosphomethylpyrim"/>
    <property type="match status" value="1"/>
</dbReference>
<feature type="chain" id="PRO_1000004729" description="Phosphomethylpyrimidine synthase">
    <location>
        <begin position="1"/>
        <end position="614"/>
    </location>
</feature>
<feature type="binding site" evidence="1">
    <location>
        <position position="226"/>
    </location>
    <ligand>
        <name>substrate</name>
    </ligand>
</feature>
<feature type="binding site" evidence="1">
    <location>
        <position position="255"/>
    </location>
    <ligand>
        <name>substrate</name>
    </ligand>
</feature>
<feature type="binding site" evidence="1">
    <location>
        <position position="284"/>
    </location>
    <ligand>
        <name>substrate</name>
    </ligand>
</feature>
<feature type="binding site" evidence="1">
    <location>
        <position position="320"/>
    </location>
    <ligand>
        <name>substrate</name>
    </ligand>
</feature>
<feature type="binding site" evidence="1">
    <location>
        <begin position="340"/>
        <end position="342"/>
    </location>
    <ligand>
        <name>substrate</name>
    </ligand>
</feature>
<feature type="binding site" evidence="1">
    <location>
        <begin position="381"/>
        <end position="384"/>
    </location>
    <ligand>
        <name>substrate</name>
    </ligand>
</feature>
<feature type="binding site" evidence="1">
    <location>
        <position position="420"/>
    </location>
    <ligand>
        <name>substrate</name>
    </ligand>
</feature>
<feature type="binding site" evidence="1">
    <location>
        <position position="424"/>
    </location>
    <ligand>
        <name>Zn(2+)</name>
        <dbReference type="ChEBI" id="CHEBI:29105"/>
    </ligand>
</feature>
<feature type="binding site" evidence="1">
    <location>
        <position position="447"/>
    </location>
    <ligand>
        <name>substrate</name>
    </ligand>
</feature>
<feature type="binding site" evidence="1">
    <location>
        <position position="488"/>
    </location>
    <ligand>
        <name>Zn(2+)</name>
        <dbReference type="ChEBI" id="CHEBI:29105"/>
    </ligand>
</feature>
<feature type="binding site" evidence="1">
    <location>
        <position position="568"/>
    </location>
    <ligand>
        <name>[4Fe-4S] cluster</name>
        <dbReference type="ChEBI" id="CHEBI:49883"/>
        <note>4Fe-4S-S-AdoMet</note>
    </ligand>
</feature>
<feature type="binding site" evidence="1">
    <location>
        <position position="571"/>
    </location>
    <ligand>
        <name>[4Fe-4S] cluster</name>
        <dbReference type="ChEBI" id="CHEBI:49883"/>
        <note>4Fe-4S-S-AdoMet</note>
    </ligand>
</feature>
<feature type="binding site" evidence="1">
    <location>
        <position position="576"/>
    </location>
    <ligand>
        <name>[4Fe-4S] cluster</name>
        <dbReference type="ChEBI" id="CHEBI:49883"/>
        <note>4Fe-4S-S-AdoMet</note>
    </ligand>
</feature>